<evidence type="ECO:0000255" key="1">
    <source>
        <dbReference type="HAMAP-Rule" id="MF_00815"/>
    </source>
</evidence>
<dbReference type="EMBL" id="CP000241">
    <property type="protein sequence ID" value="ABF85138.1"/>
    <property type="molecule type" value="Genomic_DNA"/>
</dbReference>
<dbReference type="RefSeq" id="WP_000002161.1">
    <property type="nucleotide sequence ID" value="NC_008086.1"/>
</dbReference>
<dbReference type="SMR" id="Q1CSD4"/>
<dbReference type="KEGG" id="hpa:HPAG1_1071"/>
<dbReference type="HOGENOM" id="CLU_050669_0_1_7"/>
<dbReference type="GO" id="GO:0005886">
    <property type="term" value="C:plasma membrane"/>
    <property type="evidence" value="ECO:0007669"/>
    <property type="project" value="UniProtKB-SubCell"/>
</dbReference>
<dbReference type="GO" id="GO:0045259">
    <property type="term" value="C:proton-transporting ATP synthase complex"/>
    <property type="evidence" value="ECO:0007669"/>
    <property type="project" value="UniProtKB-KW"/>
</dbReference>
<dbReference type="GO" id="GO:0005524">
    <property type="term" value="F:ATP binding"/>
    <property type="evidence" value="ECO:0007669"/>
    <property type="project" value="UniProtKB-UniRule"/>
</dbReference>
<dbReference type="GO" id="GO:0046933">
    <property type="term" value="F:proton-transporting ATP synthase activity, rotational mechanism"/>
    <property type="evidence" value="ECO:0007669"/>
    <property type="project" value="UniProtKB-UniRule"/>
</dbReference>
<dbReference type="GO" id="GO:0042777">
    <property type="term" value="P:proton motive force-driven plasma membrane ATP synthesis"/>
    <property type="evidence" value="ECO:0007669"/>
    <property type="project" value="UniProtKB-UniRule"/>
</dbReference>
<dbReference type="CDD" id="cd12151">
    <property type="entry name" value="F1-ATPase_gamma"/>
    <property type="match status" value="1"/>
</dbReference>
<dbReference type="FunFam" id="1.10.287.80:FF:000007">
    <property type="entry name" value="ATP synthase gamma chain"/>
    <property type="match status" value="1"/>
</dbReference>
<dbReference type="FunFam" id="3.40.1380.10:FF:000006">
    <property type="entry name" value="ATP synthase gamma chain"/>
    <property type="match status" value="1"/>
</dbReference>
<dbReference type="Gene3D" id="3.40.1380.10">
    <property type="match status" value="1"/>
</dbReference>
<dbReference type="Gene3D" id="1.10.287.80">
    <property type="entry name" value="ATP synthase, gamma subunit, helix hairpin domain"/>
    <property type="match status" value="2"/>
</dbReference>
<dbReference type="HAMAP" id="MF_00815">
    <property type="entry name" value="ATP_synth_gamma_bact"/>
    <property type="match status" value="1"/>
</dbReference>
<dbReference type="InterPro" id="IPR035968">
    <property type="entry name" value="ATP_synth_F1_ATPase_gsu"/>
</dbReference>
<dbReference type="InterPro" id="IPR000131">
    <property type="entry name" value="ATP_synth_F1_gsu"/>
</dbReference>
<dbReference type="NCBIfam" id="TIGR01146">
    <property type="entry name" value="ATPsyn_F1gamma"/>
    <property type="match status" value="1"/>
</dbReference>
<dbReference type="PANTHER" id="PTHR11693">
    <property type="entry name" value="ATP SYNTHASE GAMMA CHAIN"/>
    <property type="match status" value="1"/>
</dbReference>
<dbReference type="PANTHER" id="PTHR11693:SF22">
    <property type="entry name" value="ATP SYNTHASE SUBUNIT GAMMA, MITOCHONDRIAL"/>
    <property type="match status" value="1"/>
</dbReference>
<dbReference type="Pfam" id="PF00231">
    <property type="entry name" value="ATP-synt"/>
    <property type="match status" value="1"/>
</dbReference>
<dbReference type="PRINTS" id="PR00126">
    <property type="entry name" value="ATPASEGAMMA"/>
</dbReference>
<dbReference type="SUPFAM" id="SSF52943">
    <property type="entry name" value="ATP synthase (F1-ATPase), gamma subunit"/>
    <property type="match status" value="1"/>
</dbReference>
<feature type="chain" id="PRO_1000053227" description="ATP synthase gamma chain">
    <location>
        <begin position="1"/>
        <end position="301"/>
    </location>
</feature>
<sequence>MANLRDIRKKIGSVKNTQKITHAMKLVSTSKLRKAEEVARNSRAYALKLDAVFDDVLSKMKNQGIEDIQSKYFRELERLEIKKVDIIFITADKGLCGGFNTNTIKKVLACTNEYKEKDIKVRLCGIGKKGNEYFSFNGIEVLDKINNLSSMPNYERAQEFMKKVVEDYLSGKTDKVIIIHNGFKNMISQEIRVKTILPIGYKIIHQNPQPNEAQETITSEPSGSEDEILDSLAEKYVEYSLYYALIDSLAAEHSARMQAMDTATNNAKDLVKTLTISYNKARQEAITTELVEINAGVEALK</sequence>
<proteinExistence type="inferred from homology"/>
<gene>
    <name evidence="1" type="primary">atpG</name>
    <name type="ordered locus">HPAG1_1071</name>
</gene>
<protein>
    <recommendedName>
        <fullName evidence="1">ATP synthase gamma chain</fullName>
    </recommendedName>
    <alternativeName>
        <fullName evidence="1">ATP synthase F1 sector gamma subunit</fullName>
    </alternativeName>
    <alternativeName>
        <fullName evidence="1">F-ATPase gamma subunit</fullName>
    </alternativeName>
</protein>
<reference key="1">
    <citation type="journal article" date="2006" name="Proc. Natl. Acad. Sci. U.S.A.">
        <title>The complete genome sequence of a chronic atrophic gastritis Helicobacter pylori strain: evolution during disease progression.</title>
        <authorList>
            <person name="Oh J.D."/>
            <person name="Kling-Baeckhed H."/>
            <person name="Giannakis M."/>
            <person name="Xu J."/>
            <person name="Fulton R.S."/>
            <person name="Fulton L.A."/>
            <person name="Cordum H.S."/>
            <person name="Wang C."/>
            <person name="Elliott G."/>
            <person name="Edwards J."/>
            <person name="Mardis E.R."/>
            <person name="Engstrand L.G."/>
            <person name="Gordon J.I."/>
        </authorList>
    </citation>
    <scope>NUCLEOTIDE SEQUENCE [LARGE SCALE GENOMIC DNA]</scope>
    <source>
        <strain>HPAG1</strain>
    </source>
</reference>
<organism>
    <name type="scientific">Helicobacter pylori (strain HPAG1)</name>
    <dbReference type="NCBI Taxonomy" id="357544"/>
    <lineage>
        <taxon>Bacteria</taxon>
        <taxon>Pseudomonadati</taxon>
        <taxon>Campylobacterota</taxon>
        <taxon>Epsilonproteobacteria</taxon>
        <taxon>Campylobacterales</taxon>
        <taxon>Helicobacteraceae</taxon>
        <taxon>Helicobacter</taxon>
    </lineage>
</organism>
<comment type="function">
    <text evidence="1">Produces ATP from ADP in the presence of a proton gradient across the membrane. The gamma chain is believed to be important in regulating ATPase activity and the flow of protons through the CF(0) complex.</text>
</comment>
<comment type="subunit">
    <text evidence="1">F-type ATPases have 2 components, CF(1) - the catalytic core - and CF(0) - the membrane proton channel. CF(1) has five subunits: alpha(3), beta(3), gamma(1), delta(1), epsilon(1). CF(0) has three main subunits: a, b and c.</text>
</comment>
<comment type="subcellular location">
    <subcellularLocation>
        <location evidence="1">Cell inner membrane</location>
        <topology evidence="1">Peripheral membrane protein</topology>
    </subcellularLocation>
</comment>
<comment type="similarity">
    <text evidence="1">Belongs to the ATPase gamma chain family.</text>
</comment>
<accession>Q1CSD4</accession>
<name>ATPG_HELPH</name>
<keyword id="KW-0066">ATP synthesis</keyword>
<keyword id="KW-0997">Cell inner membrane</keyword>
<keyword id="KW-1003">Cell membrane</keyword>
<keyword id="KW-0139">CF(1)</keyword>
<keyword id="KW-0375">Hydrogen ion transport</keyword>
<keyword id="KW-0406">Ion transport</keyword>
<keyword id="KW-0472">Membrane</keyword>
<keyword id="KW-0813">Transport</keyword>